<comment type="function">
    <text evidence="2">One of the essential components for the initiation of protein synthesis. Protects formylmethionyl-tRNA from spontaneous hydrolysis and promotes its binding to the 30S ribosomal subunits. Also involved in the hydrolysis of GTP during the formation of the 70S ribosomal complex.</text>
</comment>
<comment type="subcellular location">
    <subcellularLocation>
        <location evidence="2">Cytoplasm</location>
    </subcellularLocation>
</comment>
<comment type="similarity">
    <text evidence="2">Belongs to the TRAFAC class translation factor GTPase superfamily. Classic translation factor GTPase family. IF-2 subfamily.</text>
</comment>
<keyword id="KW-0963">Cytoplasm</keyword>
<keyword id="KW-0342">GTP-binding</keyword>
<keyword id="KW-0396">Initiation factor</keyword>
<keyword id="KW-0547">Nucleotide-binding</keyword>
<keyword id="KW-0648">Protein biosynthesis</keyword>
<feature type="chain" id="PRO_1000075610" description="Translation initiation factor IF-2">
    <location>
        <begin position="1"/>
        <end position="962"/>
    </location>
</feature>
<feature type="domain" description="tr-type G">
    <location>
        <begin position="462"/>
        <end position="631"/>
    </location>
</feature>
<feature type="region of interest" description="Disordered" evidence="3">
    <location>
        <begin position="99"/>
        <end position="365"/>
    </location>
</feature>
<feature type="region of interest" description="G1" evidence="1">
    <location>
        <begin position="471"/>
        <end position="478"/>
    </location>
</feature>
<feature type="region of interest" description="G2" evidence="1">
    <location>
        <begin position="496"/>
        <end position="500"/>
    </location>
</feature>
<feature type="region of interest" description="G3" evidence="1">
    <location>
        <begin position="517"/>
        <end position="520"/>
    </location>
</feature>
<feature type="region of interest" description="G4" evidence="1">
    <location>
        <begin position="571"/>
        <end position="574"/>
    </location>
</feature>
<feature type="region of interest" description="G5" evidence="1">
    <location>
        <begin position="607"/>
        <end position="609"/>
    </location>
</feature>
<feature type="compositionally biased region" description="Basic and acidic residues" evidence="3">
    <location>
        <begin position="117"/>
        <end position="141"/>
    </location>
</feature>
<feature type="compositionally biased region" description="Low complexity" evidence="3">
    <location>
        <begin position="145"/>
        <end position="155"/>
    </location>
</feature>
<feature type="compositionally biased region" description="Basic and acidic residues" evidence="3">
    <location>
        <begin position="173"/>
        <end position="216"/>
    </location>
</feature>
<feature type="compositionally biased region" description="Low complexity" evidence="3">
    <location>
        <begin position="219"/>
        <end position="234"/>
    </location>
</feature>
<feature type="compositionally biased region" description="Basic and acidic residues" evidence="3">
    <location>
        <begin position="235"/>
        <end position="269"/>
    </location>
</feature>
<feature type="compositionally biased region" description="Low complexity" evidence="3">
    <location>
        <begin position="270"/>
        <end position="283"/>
    </location>
</feature>
<feature type="compositionally biased region" description="Basic and acidic residues" evidence="3">
    <location>
        <begin position="338"/>
        <end position="354"/>
    </location>
</feature>
<feature type="binding site" evidence="2">
    <location>
        <begin position="471"/>
        <end position="478"/>
    </location>
    <ligand>
        <name>GTP</name>
        <dbReference type="ChEBI" id="CHEBI:37565"/>
    </ligand>
</feature>
<feature type="binding site" evidence="2">
    <location>
        <begin position="517"/>
        <end position="521"/>
    </location>
    <ligand>
        <name>GTP</name>
        <dbReference type="ChEBI" id="CHEBI:37565"/>
    </ligand>
</feature>
<feature type="binding site" evidence="2">
    <location>
        <begin position="571"/>
        <end position="574"/>
    </location>
    <ligand>
        <name>GTP</name>
        <dbReference type="ChEBI" id="CHEBI:37565"/>
    </ligand>
</feature>
<gene>
    <name evidence="2" type="primary">infB</name>
    <name type="ordered locus">NMCC_1543</name>
</gene>
<name>IF2_NEIM0</name>
<evidence type="ECO:0000250" key="1"/>
<evidence type="ECO:0000255" key="2">
    <source>
        <dbReference type="HAMAP-Rule" id="MF_00100"/>
    </source>
</evidence>
<evidence type="ECO:0000256" key="3">
    <source>
        <dbReference type="SAM" id="MobiDB-lite"/>
    </source>
</evidence>
<reference key="1">
    <citation type="journal article" date="2008" name="Genomics">
        <title>Characterization of ST-4821 complex, a unique Neisseria meningitidis clone.</title>
        <authorList>
            <person name="Peng J."/>
            <person name="Yang L."/>
            <person name="Yang F."/>
            <person name="Yang J."/>
            <person name="Yan Y."/>
            <person name="Nie H."/>
            <person name="Zhang X."/>
            <person name="Xiong Z."/>
            <person name="Jiang Y."/>
            <person name="Cheng F."/>
            <person name="Xu X."/>
            <person name="Chen S."/>
            <person name="Sun L."/>
            <person name="Li W."/>
            <person name="Shen Y."/>
            <person name="Shao Z."/>
            <person name="Liang X."/>
            <person name="Xu J."/>
            <person name="Jin Q."/>
        </authorList>
    </citation>
    <scope>NUCLEOTIDE SEQUENCE [LARGE SCALE GENOMIC DNA]</scope>
    <source>
        <strain>053442</strain>
    </source>
</reference>
<organism>
    <name type="scientific">Neisseria meningitidis serogroup C (strain 053442)</name>
    <dbReference type="NCBI Taxonomy" id="374833"/>
    <lineage>
        <taxon>Bacteria</taxon>
        <taxon>Pseudomonadati</taxon>
        <taxon>Pseudomonadota</taxon>
        <taxon>Betaproteobacteria</taxon>
        <taxon>Neisseriales</taxon>
        <taxon>Neisseriaceae</taxon>
        <taxon>Neisseria</taxon>
    </lineage>
</organism>
<dbReference type="EMBL" id="CP000381">
    <property type="protein sequence ID" value="ABX73700.1"/>
    <property type="molecule type" value="Genomic_DNA"/>
</dbReference>
<dbReference type="RefSeq" id="WP_012221906.1">
    <property type="nucleotide sequence ID" value="NC_010120.1"/>
</dbReference>
<dbReference type="SMR" id="A9M1D5"/>
<dbReference type="KEGG" id="nmn:NMCC_1543"/>
<dbReference type="HOGENOM" id="CLU_006301_6_0_4"/>
<dbReference type="Proteomes" id="UP000001177">
    <property type="component" value="Chromosome"/>
</dbReference>
<dbReference type="GO" id="GO:0005829">
    <property type="term" value="C:cytosol"/>
    <property type="evidence" value="ECO:0007669"/>
    <property type="project" value="TreeGrafter"/>
</dbReference>
<dbReference type="GO" id="GO:0005525">
    <property type="term" value="F:GTP binding"/>
    <property type="evidence" value="ECO:0007669"/>
    <property type="project" value="UniProtKB-KW"/>
</dbReference>
<dbReference type="GO" id="GO:0003924">
    <property type="term" value="F:GTPase activity"/>
    <property type="evidence" value="ECO:0007669"/>
    <property type="project" value="UniProtKB-UniRule"/>
</dbReference>
<dbReference type="GO" id="GO:0003743">
    <property type="term" value="F:translation initiation factor activity"/>
    <property type="evidence" value="ECO:0007669"/>
    <property type="project" value="UniProtKB-UniRule"/>
</dbReference>
<dbReference type="CDD" id="cd01887">
    <property type="entry name" value="IF2_eIF5B"/>
    <property type="match status" value="1"/>
</dbReference>
<dbReference type="CDD" id="cd03702">
    <property type="entry name" value="IF2_mtIF2_II"/>
    <property type="match status" value="1"/>
</dbReference>
<dbReference type="CDD" id="cd03692">
    <property type="entry name" value="mtIF2_IVc"/>
    <property type="match status" value="1"/>
</dbReference>
<dbReference type="FunFam" id="2.40.30.10:FF:000007">
    <property type="entry name" value="Translation initiation factor IF-2"/>
    <property type="match status" value="1"/>
</dbReference>
<dbReference type="FunFam" id="2.40.30.10:FF:000008">
    <property type="entry name" value="Translation initiation factor IF-2"/>
    <property type="match status" value="1"/>
</dbReference>
<dbReference type="FunFam" id="3.40.50.10050:FF:000001">
    <property type="entry name" value="Translation initiation factor IF-2"/>
    <property type="match status" value="1"/>
</dbReference>
<dbReference type="FunFam" id="3.40.50.300:FF:000019">
    <property type="entry name" value="Translation initiation factor IF-2"/>
    <property type="match status" value="1"/>
</dbReference>
<dbReference type="Gene3D" id="3.40.50.300">
    <property type="entry name" value="P-loop containing nucleotide triphosphate hydrolases"/>
    <property type="match status" value="1"/>
</dbReference>
<dbReference type="Gene3D" id="3.30.56.50">
    <property type="entry name" value="Putative DNA-binding domain, N-terminal subdomain of bacterial translation initiation factor IF2"/>
    <property type="match status" value="1"/>
</dbReference>
<dbReference type="Gene3D" id="2.40.30.10">
    <property type="entry name" value="Translation factors"/>
    <property type="match status" value="2"/>
</dbReference>
<dbReference type="Gene3D" id="3.40.50.10050">
    <property type="entry name" value="Translation initiation factor IF- 2, domain 3"/>
    <property type="match status" value="1"/>
</dbReference>
<dbReference type="HAMAP" id="MF_00100_B">
    <property type="entry name" value="IF_2_B"/>
    <property type="match status" value="1"/>
</dbReference>
<dbReference type="InterPro" id="IPR009061">
    <property type="entry name" value="DNA-bd_dom_put_sf"/>
</dbReference>
<dbReference type="InterPro" id="IPR053905">
    <property type="entry name" value="EF-G-like_DII"/>
</dbReference>
<dbReference type="InterPro" id="IPR044145">
    <property type="entry name" value="IF2_II"/>
</dbReference>
<dbReference type="InterPro" id="IPR006847">
    <property type="entry name" value="IF2_N"/>
</dbReference>
<dbReference type="InterPro" id="IPR027417">
    <property type="entry name" value="P-loop_NTPase"/>
</dbReference>
<dbReference type="InterPro" id="IPR005225">
    <property type="entry name" value="Small_GTP-bd"/>
</dbReference>
<dbReference type="InterPro" id="IPR000795">
    <property type="entry name" value="T_Tr_GTP-bd_dom"/>
</dbReference>
<dbReference type="InterPro" id="IPR000178">
    <property type="entry name" value="TF_IF2_bacterial-like"/>
</dbReference>
<dbReference type="InterPro" id="IPR015760">
    <property type="entry name" value="TIF_IF2"/>
</dbReference>
<dbReference type="InterPro" id="IPR023115">
    <property type="entry name" value="TIF_IF2_dom3"/>
</dbReference>
<dbReference type="InterPro" id="IPR036925">
    <property type="entry name" value="TIF_IF2_dom3_sf"/>
</dbReference>
<dbReference type="InterPro" id="IPR009000">
    <property type="entry name" value="Transl_B-barrel_sf"/>
</dbReference>
<dbReference type="NCBIfam" id="TIGR00487">
    <property type="entry name" value="IF-2"/>
    <property type="match status" value="1"/>
</dbReference>
<dbReference type="NCBIfam" id="TIGR00231">
    <property type="entry name" value="small_GTP"/>
    <property type="match status" value="1"/>
</dbReference>
<dbReference type="PANTHER" id="PTHR43381:SF5">
    <property type="entry name" value="TR-TYPE G DOMAIN-CONTAINING PROTEIN"/>
    <property type="match status" value="1"/>
</dbReference>
<dbReference type="PANTHER" id="PTHR43381">
    <property type="entry name" value="TRANSLATION INITIATION FACTOR IF-2-RELATED"/>
    <property type="match status" value="1"/>
</dbReference>
<dbReference type="Pfam" id="PF22042">
    <property type="entry name" value="EF-G_D2"/>
    <property type="match status" value="1"/>
</dbReference>
<dbReference type="Pfam" id="PF00009">
    <property type="entry name" value="GTP_EFTU"/>
    <property type="match status" value="1"/>
</dbReference>
<dbReference type="Pfam" id="PF11987">
    <property type="entry name" value="IF-2"/>
    <property type="match status" value="1"/>
</dbReference>
<dbReference type="Pfam" id="PF04760">
    <property type="entry name" value="IF2_N"/>
    <property type="match status" value="2"/>
</dbReference>
<dbReference type="SUPFAM" id="SSF52156">
    <property type="entry name" value="Initiation factor IF2/eIF5b, domain 3"/>
    <property type="match status" value="1"/>
</dbReference>
<dbReference type="SUPFAM" id="SSF52540">
    <property type="entry name" value="P-loop containing nucleoside triphosphate hydrolases"/>
    <property type="match status" value="1"/>
</dbReference>
<dbReference type="SUPFAM" id="SSF46955">
    <property type="entry name" value="Putative DNA-binding domain"/>
    <property type="match status" value="1"/>
</dbReference>
<dbReference type="SUPFAM" id="SSF50447">
    <property type="entry name" value="Translation proteins"/>
    <property type="match status" value="2"/>
</dbReference>
<dbReference type="PROSITE" id="PS51722">
    <property type="entry name" value="G_TR_2"/>
    <property type="match status" value="1"/>
</dbReference>
<dbReference type="PROSITE" id="PS01176">
    <property type="entry name" value="IF2"/>
    <property type="match status" value="1"/>
</dbReference>
<sequence length="962" mass="103139">MSNTTVEQFAAELKRPVEDLLKQLKEAGVSKNSGSDSLTLDDKQLLNAYLTKKNGSNGGTISIRRTKTEVSTVDGVKVETRKRGRTVNIPSAEELAAQVKAAQTQAAPVRPEQTAEDAAKARAEAAARAEARAKAEAEAAKLKAAKAGNKAKPAAQKPTEAKAETAPVAAETKPAEESKAEKAQADKMPSKKPAEPKEKAAKPKHERNGKGKDAKKPAKPAAPAVPQPVVSAEEQAQRDEEARRAAALRAHQEALLKEKQERQARREAMKQQAEQQAKAAQEAKTGRQRPAKPAEKPQAAAPALENKPVNPAKAKKENRRNRDDEGQGRNAKGKGGKGGRDRNNARNGDDERVRGGKKGKKLKLEPNQHAFQAPTEPVVHEVLVPETITVADLAHKMAVKGVEVVKALMKMGMMVTINQSIDQDTALIVVEELGHIGKPAAADDPEAFLDEGAEAVEAEALPRPPVVTVMGHVDHGKTSLLDYIRRTKVVQGEAGGITQHIGAYHVETPRGVITFLDTPGHEAFTAMRARGAKATDIVILVVAADDGVMPQTIEAIAHAKAAGVPMVVAVNKIDKEAANPERIRQELTAHEVVPDEWGGDVQFIDVSAKKGLNIDALLEAVLLEAEVLELTAPVDAPAKGIIVEARLDKGRGAVATLLVQSGTLKKGDMLLAGTAFGKIRAMVDENGKSITEASPSIPVEILGLSDVPNAGEDAMVLADEKKAREIALFRQGKYRDVRLAKQQAAKLENMFNNMGENQAQSLSVIIKADVQGSYEALAGSLKKLSTDEVKVNVLHSGVGGITESDVNLAIASGAFIIGFNVRADASSRKLAENENVEIRYYNIIYDAIDDVKAAMSGMLSPEEKEQVTGTVEIRQVISVSKVGNIAGCMVTDGVVKRDSHVRLIRNNVVIHTGELASLKRYKDDVKEVRMGFECGLMLKGYNEIMEGDQLECFDIVEVARTL</sequence>
<proteinExistence type="inferred from homology"/>
<protein>
    <recommendedName>
        <fullName evidence="2">Translation initiation factor IF-2</fullName>
    </recommendedName>
</protein>
<accession>A9M1D5</accession>